<gene>
    <name type="primary">NPPB</name>
</gene>
<reference key="1">
    <citation type="journal article" date="2009" name="Genome Biol.">
        <title>A whole-genome assembly of the domestic cow, Bos taurus.</title>
        <authorList>
            <person name="Zimin A.V."/>
            <person name="Delcher A.L."/>
            <person name="Florea L."/>
            <person name="Kelley D.R."/>
            <person name="Schatz M.C."/>
            <person name="Puiu D."/>
            <person name="Hanrahan F."/>
            <person name="Pertea G."/>
            <person name="Van Tassell C.P."/>
            <person name="Sonstegard T.S."/>
            <person name="Marcais G."/>
            <person name="Roberts M."/>
            <person name="Subramanian P."/>
            <person name="Yorke J.A."/>
            <person name="Salzberg S.L."/>
        </authorList>
    </citation>
    <scope>NUCLEOTIDE SEQUENCE [LARGE SCALE GENOMIC DNA]</scope>
    <source>
        <strain>Hereford</strain>
    </source>
</reference>
<reference key="2">
    <citation type="journal article" date="1989" name="Mol. Endocrinol.">
        <title>Purification and primary structure of pro-aldosterone secretion inhibitory factor from bovine adrenal chromaffin cells.</title>
        <authorList>
            <person name="Nguyen T.T."/>
            <person name="Lazure C."/>
            <person name="Babinski K."/>
            <person name="Chretien M."/>
            <person name="de Lean A."/>
            <person name="Ong H."/>
        </authorList>
    </citation>
    <scope>PROTEIN SEQUENCE OF 27-129</scope>
    <scope>SUBCELLULAR LOCATION</scope>
</reference>
<reference key="3">
    <citation type="journal article" date="1989" name="Endocrinology">
        <title>Aldosterone secretion inhibitory factor: a novel neuropeptide in bovine chromaffin cells.</title>
        <authorList>
            <person name="Nguyen T.T."/>
            <person name="Lazure C."/>
            <person name="Babinski K."/>
            <person name="Chretien M."/>
            <person name="Ong H."/>
            <person name="de Lean A."/>
        </authorList>
    </citation>
    <scope>PROTEIN SEQUENCE OF 95-129</scope>
    <scope>SUBCELLULAR LOCATION</scope>
</reference>
<keyword id="KW-0903">Direct protein sequencing</keyword>
<keyword id="KW-1015">Disulfide bond</keyword>
<keyword id="KW-0372">Hormone</keyword>
<keyword id="KW-1185">Reference proteome</keyword>
<keyword id="KW-0964">Secreted</keyword>
<keyword id="KW-0732">Signal</keyword>
<keyword id="KW-0838">Vasoactive</keyword>
<protein>
    <recommendedName>
        <fullName>Natriuretic peptides B</fullName>
    </recommendedName>
    <alternativeName>
        <fullName evidence="4">Brain natriuretic factor prohormone</fullName>
        <shortName evidence="5">preproBNP</shortName>
        <shortName evidence="4">proBNP</shortName>
    </alternativeName>
    <alternativeName>
        <fullName evidence="2">Gamma-brain natriuretic peptide</fullName>
    </alternativeName>
    <alternativeName>
        <fullName evidence="3">Iso-ANP</fullName>
    </alternativeName>
    <component>
        <recommendedName>
            <fullName evidence="8">Aldosterone secretion inhibitory factor</fullName>
            <shortName evidence="8">ASIF</shortName>
        </recommendedName>
    </component>
    <component>
        <recommendedName>
            <fullName evidence="2">Brain natriuretic peptide 26</fullName>
            <shortName evidence="2">BNP-26</shortName>
        </recommendedName>
    </component>
    <component>
        <recommendedName>
            <fullName evidence="1">Brain natriuretic peptide 29</fullName>
            <shortName evidence="1">BNP-29</shortName>
        </recommendedName>
    </component>
</protein>
<feature type="signal peptide" evidence="6">
    <location>
        <begin position="1"/>
        <end position="26"/>
    </location>
</feature>
<feature type="chain" id="PRO_0000001523" description="Natriuretic peptides B">
    <location>
        <begin position="27"/>
        <end position="129"/>
    </location>
</feature>
<feature type="peptide" id="PRO_0000001524" description="Aldosterone secretion inhibitory factor" evidence="7">
    <location>
        <begin position="95"/>
        <end position="129"/>
    </location>
</feature>
<feature type="peptide" id="PRO_0000451934" description="Brain natriuretic peptide 29" evidence="1">
    <location>
        <begin position="101"/>
        <end position="129"/>
    </location>
</feature>
<feature type="peptide" id="PRO_0000001525" description="Brain natriuretic peptide 26" evidence="2">
    <location>
        <begin position="104"/>
        <end position="129"/>
    </location>
</feature>
<feature type="site" description="Cleavage; by CORIN or FURIN" evidence="4">
    <location>
        <begin position="97"/>
        <end position="98"/>
    </location>
</feature>
<feature type="site" description="Cleavage; by FAP" evidence="4">
    <location>
        <begin position="99"/>
        <end position="100"/>
    </location>
</feature>
<feature type="site" description="Cleavage; by CORIN" evidence="4">
    <location>
        <begin position="100"/>
        <end position="101"/>
    </location>
</feature>
<feature type="disulfide bond">
    <location>
        <begin position="107"/>
        <end position="123"/>
    </location>
</feature>
<name>ANFB_BOVIN</name>
<comment type="function">
    <text evidence="4 5">Cardiac hormone that plays a key role in mediating cardio-renal homeostasis (By similarity). May also function as a paracrine antifibrotic factor in the heart (By similarity). Acts by specifically binding and stimulating NPR1 to produce cGMP, which in turn activates effector proteins that drive various biological responses. Involved in regulating the extracellular fluid volume and maintaining the fluid-electrolyte balance through natriuresis, diuresis, vasorelaxation, and inhibition of renin and aldosterone secretion. Binds the clearance receptor NPR3 (By similarity).</text>
</comment>
<comment type="subcellular location">
    <subcellularLocation>
        <location evidence="4">Secreted</location>
    </subcellularLocation>
    <text evidence="4">Detected in blood.</text>
</comment>
<comment type="subcellular location">
    <molecule>Aldosterone secretion inhibitory factor</molecule>
    <subcellularLocation>
        <location evidence="6 7">Secreted</location>
    </subcellularLocation>
</comment>
<comment type="PTM">
    <text evidence="4">The precursor molecule is proteolytically cleaved, possibly by FURIN or CORIN, to produce the active peptide (By similarity). May undergo further proteolytic cleavage by various proteases such as DPP4, MME and possibly FAP, to give rise to a variety of shorter peptides (By similarity). May be cleaved at Pro-99 by the prolyl endopeptidase FAP (seprase) activity (in vitro) (By similarity). May be degraded by IDE (By similarity). During IDE degradation, the resulting products initially increase the activation of NPR1 and can also stimulate NPR2 to produce cGMP before the fragments are completely degraded and inactivated by IDE (in vitro) (By similarity).</text>
</comment>
<comment type="similarity">
    <text evidence="9">Belongs to the natriuretic peptide family.</text>
</comment>
<evidence type="ECO:0000250" key="1">
    <source>
        <dbReference type="UniProtKB" id="O46541"/>
    </source>
</evidence>
<evidence type="ECO:0000250" key="2">
    <source>
        <dbReference type="UniProtKB" id="P07634"/>
    </source>
</evidence>
<evidence type="ECO:0000250" key="3">
    <source>
        <dbReference type="UniProtKB" id="P13205"/>
    </source>
</evidence>
<evidence type="ECO:0000250" key="4">
    <source>
        <dbReference type="UniProtKB" id="P16860"/>
    </source>
</evidence>
<evidence type="ECO:0000250" key="5">
    <source>
        <dbReference type="UniProtKB" id="P40753"/>
    </source>
</evidence>
<evidence type="ECO:0000269" key="6">
    <source>
    </source>
</evidence>
<evidence type="ECO:0000269" key="7">
    <source>
    </source>
</evidence>
<evidence type="ECO:0000303" key="8">
    <source>
    </source>
</evidence>
<evidence type="ECO:0000305" key="9"/>
<sequence length="129" mass="14113">MDPQTALSRALLLLLFLHLSLLGCRSHPVGGPGPVSELPGLQELLDRLRDRVSELQAEQLRVEPLQQGQGLEETWDSPAAAPAGFLGPHHSILRALRGPKMMRDSGCFGRRLDRIGSLSGLGCNVLRRY</sequence>
<proteinExistence type="evidence at protein level"/>
<accession>P13204</accession>
<accession>F1MWE9</accession>
<organism>
    <name type="scientific">Bos taurus</name>
    <name type="common">Bovine</name>
    <dbReference type="NCBI Taxonomy" id="9913"/>
    <lineage>
        <taxon>Eukaryota</taxon>
        <taxon>Metazoa</taxon>
        <taxon>Chordata</taxon>
        <taxon>Craniata</taxon>
        <taxon>Vertebrata</taxon>
        <taxon>Euteleostomi</taxon>
        <taxon>Mammalia</taxon>
        <taxon>Eutheria</taxon>
        <taxon>Laurasiatheria</taxon>
        <taxon>Artiodactyla</taxon>
        <taxon>Ruminantia</taxon>
        <taxon>Pecora</taxon>
        <taxon>Bovidae</taxon>
        <taxon>Bovinae</taxon>
        <taxon>Bos</taxon>
    </lineage>
</organism>
<dbReference type="EMBL" id="DAAA02042958">
    <property type="status" value="NOT_ANNOTATED_CDS"/>
    <property type="molecule type" value="Genomic_DNA"/>
</dbReference>
<dbReference type="PIR" id="A41403">
    <property type="entry name" value="A41403"/>
</dbReference>
<dbReference type="RefSeq" id="NP_001160042.1">
    <property type="nucleotide sequence ID" value="NM_001166570.1"/>
</dbReference>
<dbReference type="BMRB" id="P13204"/>
<dbReference type="FunCoup" id="P13204">
    <property type="interactions" value="59"/>
</dbReference>
<dbReference type="STRING" id="9913.ENSBTAP00000028974"/>
<dbReference type="PaxDb" id="9913-ENSBTAP00000028974"/>
<dbReference type="Ensembl" id="ENSBTAT00000028974.7">
    <property type="protein sequence ID" value="ENSBTAP00000028974.5"/>
    <property type="gene ID" value="ENSBTAG00000021739.7"/>
</dbReference>
<dbReference type="GeneID" id="508734"/>
<dbReference type="KEGG" id="bta:508734"/>
<dbReference type="CTD" id="4879"/>
<dbReference type="VEuPathDB" id="HostDB:ENSBTAG00000021739"/>
<dbReference type="VGNC" id="VGNC:32211">
    <property type="gene designation" value="NPPB"/>
</dbReference>
<dbReference type="eggNOG" id="ENOG502SD0X">
    <property type="taxonomic scope" value="Eukaryota"/>
</dbReference>
<dbReference type="GeneTree" id="ENSGT00940000154513"/>
<dbReference type="HOGENOM" id="CLU_158067_0_0_1"/>
<dbReference type="InParanoid" id="P13204"/>
<dbReference type="OMA" id="RPTGVWK"/>
<dbReference type="OrthoDB" id="9892281at2759"/>
<dbReference type="TreeFam" id="TF106304"/>
<dbReference type="Proteomes" id="UP000009136">
    <property type="component" value="Chromosome 16"/>
</dbReference>
<dbReference type="Bgee" id="ENSBTAG00000021739">
    <property type="expression patterns" value="Expressed in cardiac atrium and 35 other cell types or tissues"/>
</dbReference>
<dbReference type="GO" id="GO:0005737">
    <property type="term" value="C:cytoplasm"/>
    <property type="evidence" value="ECO:0000318"/>
    <property type="project" value="GO_Central"/>
</dbReference>
<dbReference type="GO" id="GO:0005615">
    <property type="term" value="C:extracellular space"/>
    <property type="evidence" value="ECO:0000318"/>
    <property type="project" value="GO_Central"/>
</dbReference>
<dbReference type="GO" id="GO:0032991">
    <property type="term" value="C:protein-containing complex"/>
    <property type="evidence" value="ECO:0007669"/>
    <property type="project" value="Ensembl"/>
</dbReference>
<dbReference type="GO" id="GO:0005179">
    <property type="term" value="F:hormone activity"/>
    <property type="evidence" value="ECO:0000318"/>
    <property type="project" value="GO_Central"/>
</dbReference>
<dbReference type="GO" id="GO:0051427">
    <property type="term" value="F:hormone receptor binding"/>
    <property type="evidence" value="ECO:0000318"/>
    <property type="project" value="GO_Central"/>
</dbReference>
<dbReference type="GO" id="GO:0097746">
    <property type="term" value="P:blood vessel diameter maintenance"/>
    <property type="evidence" value="ECO:0007669"/>
    <property type="project" value="UniProtKB-KW"/>
</dbReference>
<dbReference type="GO" id="GO:0006182">
    <property type="term" value="P:cGMP biosynthetic process"/>
    <property type="evidence" value="ECO:0000250"/>
    <property type="project" value="UniProtKB"/>
</dbReference>
<dbReference type="GO" id="GO:0019934">
    <property type="term" value="P:cGMP-mediated signaling"/>
    <property type="evidence" value="ECO:0000318"/>
    <property type="project" value="GO_Central"/>
</dbReference>
<dbReference type="GO" id="GO:0003085">
    <property type="term" value="P:negative regulation of systemic arterial blood pressure"/>
    <property type="evidence" value="ECO:0000318"/>
    <property type="project" value="GO_Central"/>
</dbReference>
<dbReference type="GO" id="GO:0007218">
    <property type="term" value="P:neuropeptide signaling pathway"/>
    <property type="evidence" value="ECO:0000318"/>
    <property type="project" value="GO_Central"/>
</dbReference>
<dbReference type="GO" id="GO:0006457">
    <property type="term" value="P:protein folding"/>
    <property type="evidence" value="ECO:0007669"/>
    <property type="project" value="Ensembl"/>
</dbReference>
<dbReference type="GO" id="GO:0007168">
    <property type="term" value="P:receptor guanylyl cyclase signaling pathway"/>
    <property type="evidence" value="ECO:0000250"/>
    <property type="project" value="UniProtKB"/>
</dbReference>
<dbReference type="InterPro" id="IPR000663">
    <property type="entry name" value="Natr_peptide"/>
</dbReference>
<dbReference type="InterPro" id="IPR030480">
    <property type="entry name" value="Natr_peptide_CS"/>
</dbReference>
<dbReference type="InterPro" id="IPR050787">
    <property type="entry name" value="Natriuretic_peptide"/>
</dbReference>
<dbReference type="InterPro" id="IPR002408">
    <property type="entry name" value="Natriuretic_peptide_brain"/>
</dbReference>
<dbReference type="PANTHER" id="PTHR14066">
    <property type="entry name" value="ATRIAL NATRIURETIC FACTOR PRECURSOR"/>
    <property type="match status" value="1"/>
</dbReference>
<dbReference type="PANTHER" id="PTHR14066:SF10">
    <property type="entry name" value="NATRIURETIC PEPTIDES B"/>
    <property type="match status" value="1"/>
</dbReference>
<dbReference type="Pfam" id="PF00212">
    <property type="entry name" value="ANP"/>
    <property type="match status" value="1"/>
</dbReference>
<dbReference type="PRINTS" id="PR00712">
    <property type="entry name" value="BNATPEPTIDE"/>
</dbReference>
<dbReference type="PRINTS" id="PR00710">
    <property type="entry name" value="NATPEPTIDES"/>
</dbReference>
<dbReference type="SMART" id="SM00183">
    <property type="entry name" value="NAT_PEP"/>
    <property type="match status" value="1"/>
</dbReference>
<dbReference type="PROSITE" id="PS00263">
    <property type="entry name" value="NATRIURETIC_PEPTIDE"/>
    <property type="match status" value="1"/>
</dbReference>